<dbReference type="EC" id="2.7.7.60" evidence="1"/>
<dbReference type="EMBL" id="CP000058">
    <property type="protein sequence ID" value="AAZ35434.1"/>
    <property type="molecule type" value="Genomic_DNA"/>
</dbReference>
<dbReference type="RefSeq" id="WP_004657939.1">
    <property type="nucleotide sequence ID" value="NC_005773.3"/>
</dbReference>
<dbReference type="SMR" id="Q48F81"/>
<dbReference type="GeneID" id="61868789"/>
<dbReference type="KEGG" id="psp:PSPPH_3818"/>
<dbReference type="eggNOG" id="COG1211">
    <property type="taxonomic scope" value="Bacteria"/>
</dbReference>
<dbReference type="HOGENOM" id="CLU_061281_3_1_6"/>
<dbReference type="UniPathway" id="UPA00056">
    <property type="reaction ID" value="UER00093"/>
</dbReference>
<dbReference type="Proteomes" id="UP000000551">
    <property type="component" value="Chromosome"/>
</dbReference>
<dbReference type="GO" id="GO:0050518">
    <property type="term" value="F:2-C-methyl-D-erythritol 4-phosphate cytidylyltransferase activity"/>
    <property type="evidence" value="ECO:0007669"/>
    <property type="project" value="UniProtKB-UniRule"/>
</dbReference>
<dbReference type="GO" id="GO:0019288">
    <property type="term" value="P:isopentenyl diphosphate biosynthetic process, methylerythritol 4-phosphate pathway"/>
    <property type="evidence" value="ECO:0007669"/>
    <property type="project" value="UniProtKB-UniRule"/>
</dbReference>
<dbReference type="CDD" id="cd02516">
    <property type="entry name" value="CDP-ME_synthetase"/>
    <property type="match status" value="1"/>
</dbReference>
<dbReference type="FunFam" id="3.90.550.10:FF:000003">
    <property type="entry name" value="2-C-methyl-D-erythritol 4-phosphate cytidylyltransferase"/>
    <property type="match status" value="1"/>
</dbReference>
<dbReference type="Gene3D" id="3.90.550.10">
    <property type="entry name" value="Spore Coat Polysaccharide Biosynthesis Protein SpsA, Chain A"/>
    <property type="match status" value="1"/>
</dbReference>
<dbReference type="HAMAP" id="MF_00108">
    <property type="entry name" value="IspD"/>
    <property type="match status" value="1"/>
</dbReference>
<dbReference type="InterPro" id="IPR001228">
    <property type="entry name" value="IspD"/>
</dbReference>
<dbReference type="InterPro" id="IPR034683">
    <property type="entry name" value="IspD/TarI"/>
</dbReference>
<dbReference type="InterPro" id="IPR050088">
    <property type="entry name" value="IspD/TarI_cytidylyltransf_bact"/>
</dbReference>
<dbReference type="InterPro" id="IPR018294">
    <property type="entry name" value="ISPD_synthase_CS"/>
</dbReference>
<dbReference type="InterPro" id="IPR029044">
    <property type="entry name" value="Nucleotide-diphossugar_trans"/>
</dbReference>
<dbReference type="NCBIfam" id="TIGR00453">
    <property type="entry name" value="ispD"/>
    <property type="match status" value="1"/>
</dbReference>
<dbReference type="PANTHER" id="PTHR32125">
    <property type="entry name" value="2-C-METHYL-D-ERYTHRITOL 4-PHOSPHATE CYTIDYLYLTRANSFERASE, CHLOROPLASTIC"/>
    <property type="match status" value="1"/>
</dbReference>
<dbReference type="PANTHER" id="PTHR32125:SF4">
    <property type="entry name" value="2-C-METHYL-D-ERYTHRITOL 4-PHOSPHATE CYTIDYLYLTRANSFERASE, CHLOROPLASTIC"/>
    <property type="match status" value="1"/>
</dbReference>
<dbReference type="Pfam" id="PF01128">
    <property type="entry name" value="IspD"/>
    <property type="match status" value="1"/>
</dbReference>
<dbReference type="SUPFAM" id="SSF53448">
    <property type="entry name" value="Nucleotide-diphospho-sugar transferases"/>
    <property type="match status" value="1"/>
</dbReference>
<dbReference type="PROSITE" id="PS01295">
    <property type="entry name" value="ISPD"/>
    <property type="match status" value="1"/>
</dbReference>
<protein>
    <recommendedName>
        <fullName evidence="1">2-C-methyl-D-erythritol 4-phosphate cytidylyltransferase</fullName>
        <ecNumber evidence="1">2.7.7.60</ecNumber>
    </recommendedName>
    <alternativeName>
        <fullName evidence="1">4-diphosphocytidyl-2C-methyl-D-erythritol synthase</fullName>
    </alternativeName>
    <alternativeName>
        <fullName evidence="1">MEP cytidylyltransferase</fullName>
        <shortName evidence="1">MCT</shortName>
    </alternativeName>
</protein>
<gene>
    <name evidence="1" type="primary">ispD</name>
    <name type="ordered locus">PSPPH_3818</name>
</gene>
<organism>
    <name type="scientific">Pseudomonas savastanoi pv. phaseolicola (strain 1448A / Race 6)</name>
    <name type="common">Pseudomonas syringae pv. phaseolicola (strain 1448A / Race 6)</name>
    <dbReference type="NCBI Taxonomy" id="264730"/>
    <lineage>
        <taxon>Bacteria</taxon>
        <taxon>Pseudomonadati</taxon>
        <taxon>Pseudomonadota</taxon>
        <taxon>Gammaproteobacteria</taxon>
        <taxon>Pseudomonadales</taxon>
        <taxon>Pseudomonadaceae</taxon>
        <taxon>Pseudomonas</taxon>
    </lineage>
</organism>
<evidence type="ECO:0000255" key="1">
    <source>
        <dbReference type="HAMAP-Rule" id="MF_00108"/>
    </source>
</evidence>
<name>ISPD_PSE14</name>
<accession>Q48F81</accession>
<sequence length="236" mass="25884">MKDFLPAFWAVIPAAGIGARMAADRPKQYLQLGGLTILEHSLLCFLDHPRLKGLVISLAVDDPYWAALPCAKDARIQRVDGGSERSGSVLNALLHLHAQGASDNDWVLVHDAARPNLARSDLDNLLGELADDPVGGLLAVPARDTLKRADSSGRVLETVDRSLIWQAFTPQMFRLGALHRALADSLVSNVSITDEASAIEWAGQSPRLVEGRSDNIKVTRPEDLEWLRQRRTEFGR</sequence>
<feature type="chain" id="PRO_0000237811" description="2-C-methyl-D-erythritol 4-phosphate cytidylyltransferase">
    <location>
        <begin position="1"/>
        <end position="236"/>
    </location>
</feature>
<feature type="site" description="Transition state stabilizer" evidence="1">
    <location>
        <position position="20"/>
    </location>
</feature>
<feature type="site" description="Transition state stabilizer" evidence="1">
    <location>
        <position position="27"/>
    </location>
</feature>
<feature type="site" description="Positions MEP for the nucleophilic attack" evidence="1">
    <location>
        <position position="161"/>
    </location>
</feature>
<feature type="site" description="Positions MEP for the nucleophilic attack" evidence="1">
    <location>
        <position position="217"/>
    </location>
</feature>
<comment type="function">
    <text evidence="1">Catalyzes the formation of 4-diphosphocytidyl-2-C-methyl-D-erythritol from CTP and 2-C-methyl-D-erythritol 4-phosphate (MEP).</text>
</comment>
<comment type="catalytic activity">
    <reaction evidence="1">
        <text>2-C-methyl-D-erythritol 4-phosphate + CTP + H(+) = 4-CDP-2-C-methyl-D-erythritol + diphosphate</text>
        <dbReference type="Rhea" id="RHEA:13429"/>
        <dbReference type="ChEBI" id="CHEBI:15378"/>
        <dbReference type="ChEBI" id="CHEBI:33019"/>
        <dbReference type="ChEBI" id="CHEBI:37563"/>
        <dbReference type="ChEBI" id="CHEBI:57823"/>
        <dbReference type="ChEBI" id="CHEBI:58262"/>
        <dbReference type="EC" id="2.7.7.60"/>
    </reaction>
</comment>
<comment type="pathway">
    <text evidence="1">Isoprenoid biosynthesis; isopentenyl diphosphate biosynthesis via DXP pathway; isopentenyl diphosphate from 1-deoxy-D-xylulose 5-phosphate: step 2/6.</text>
</comment>
<comment type="similarity">
    <text evidence="1">Belongs to the IspD/TarI cytidylyltransferase family. IspD subfamily.</text>
</comment>
<proteinExistence type="inferred from homology"/>
<keyword id="KW-0414">Isoprene biosynthesis</keyword>
<keyword id="KW-0548">Nucleotidyltransferase</keyword>
<keyword id="KW-0808">Transferase</keyword>
<reference key="1">
    <citation type="journal article" date="2005" name="J. Bacteriol.">
        <title>Whole-genome sequence analysis of Pseudomonas syringae pv. phaseolicola 1448A reveals divergence among pathovars in genes involved in virulence and transposition.</title>
        <authorList>
            <person name="Joardar V."/>
            <person name="Lindeberg M."/>
            <person name="Jackson R.W."/>
            <person name="Selengut J."/>
            <person name="Dodson R."/>
            <person name="Brinkac L.M."/>
            <person name="Daugherty S.C."/>
            <person name="DeBoy R.T."/>
            <person name="Durkin A.S."/>
            <person name="Gwinn Giglio M."/>
            <person name="Madupu R."/>
            <person name="Nelson W.C."/>
            <person name="Rosovitz M.J."/>
            <person name="Sullivan S.A."/>
            <person name="Crabtree J."/>
            <person name="Creasy T."/>
            <person name="Davidsen T.M."/>
            <person name="Haft D.H."/>
            <person name="Zafar N."/>
            <person name="Zhou L."/>
            <person name="Halpin R."/>
            <person name="Holley T."/>
            <person name="Khouri H.M."/>
            <person name="Feldblyum T.V."/>
            <person name="White O."/>
            <person name="Fraser C.M."/>
            <person name="Chatterjee A.K."/>
            <person name="Cartinhour S."/>
            <person name="Schneider D."/>
            <person name="Mansfield J.W."/>
            <person name="Collmer A."/>
            <person name="Buell R."/>
        </authorList>
    </citation>
    <scope>NUCLEOTIDE SEQUENCE [LARGE SCALE GENOMIC DNA]</scope>
    <source>
        <strain>1448A / Race 6</strain>
    </source>
</reference>